<evidence type="ECO:0000250" key="1"/>
<evidence type="ECO:0000255" key="2">
    <source>
        <dbReference type="HAMAP-Rule" id="MF_01057"/>
    </source>
</evidence>
<protein>
    <recommendedName>
        <fullName evidence="2">tRNA (guanine-N(7)-)-methyltransferase</fullName>
        <ecNumber evidence="2">2.1.1.33</ecNumber>
    </recommendedName>
    <alternativeName>
        <fullName evidence="2">tRNA (guanine(46)-N(7))-methyltransferase</fullName>
    </alternativeName>
    <alternativeName>
        <fullName evidence="2">tRNA(m7G46)-methyltransferase</fullName>
    </alternativeName>
</protein>
<dbReference type="EC" id="2.1.1.33" evidence="2"/>
<dbReference type="EMBL" id="CP000284">
    <property type="protein sequence ID" value="ABE48502.1"/>
    <property type="molecule type" value="Genomic_DNA"/>
</dbReference>
<dbReference type="RefSeq" id="WP_011478599.1">
    <property type="nucleotide sequence ID" value="NC_007947.1"/>
</dbReference>
<dbReference type="SMR" id="Q1H4T5"/>
<dbReference type="STRING" id="265072.Mfla_0231"/>
<dbReference type="KEGG" id="mfa:Mfla_0231"/>
<dbReference type="eggNOG" id="COG0220">
    <property type="taxonomic scope" value="Bacteria"/>
</dbReference>
<dbReference type="HOGENOM" id="CLU_050910_0_1_4"/>
<dbReference type="UniPathway" id="UPA00989"/>
<dbReference type="Proteomes" id="UP000002440">
    <property type="component" value="Chromosome"/>
</dbReference>
<dbReference type="GO" id="GO:0043527">
    <property type="term" value="C:tRNA methyltransferase complex"/>
    <property type="evidence" value="ECO:0007669"/>
    <property type="project" value="TreeGrafter"/>
</dbReference>
<dbReference type="GO" id="GO:0008176">
    <property type="term" value="F:tRNA (guanine(46)-N7)-methyltransferase activity"/>
    <property type="evidence" value="ECO:0007669"/>
    <property type="project" value="UniProtKB-UniRule"/>
</dbReference>
<dbReference type="CDD" id="cd02440">
    <property type="entry name" value="AdoMet_MTases"/>
    <property type="match status" value="1"/>
</dbReference>
<dbReference type="FunFam" id="3.40.50.150:FF:000035">
    <property type="entry name" value="tRNA (guanine-N(7)-)-methyltransferase"/>
    <property type="match status" value="1"/>
</dbReference>
<dbReference type="Gene3D" id="3.40.50.150">
    <property type="entry name" value="Vaccinia Virus protein VP39"/>
    <property type="match status" value="1"/>
</dbReference>
<dbReference type="HAMAP" id="MF_01057">
    <property type="entry name" value="tRNA_methyltr_TrmB"/>
    <property type="match status" value="1"/>
</dbReference>
<dbReference type="InterPro" id="IPR029063">
    <property type="entry name" value="SAM-dependent_MTases_sf"/>
</dbReference>
<dbReference type="InterPro" id="IPR003358">
    <property type="entry name" value="tRNA_(Gua-N-7)_MeTrfase_Trmb"/>
</dbReference>
<dbReference type="InterPro" id="IPR055361">
    <property type="entry name" value="tRNA_methyltr_TrmB_bact"/>
</dbReference>
<dbReference type="NCBIfam" id="TIGR00091">
    <property type="entry name" value="tRNA (guanosine(46)-N7)-methyltransferase TrmB"/>
    <property type="match status" value="1"/>
</dbReference>
<dbReference type="PANTHER" id="PTHR23417">
    <property type="entry name" value="3-DEOXY-D-MANNO-OCTULOSONIC-ACID TRANSFERASE/TRNA GUANINE-N 7 - -METHYLTRANSFERASE"/>
    <property type="match status" value="1"/>
</dbReference>
<dbReference type="PANTHER" id="PTHR23417:SF14">
    <property type="entry name" value="PENTACOTRIPEPTIDE-REPEAT REGION OF PRORP DOMAIN-CONTAINING PROTEIN"/>
    <property type="match status" value="1"/>
</dbReference>
<dbReference type="Pfam" id="PF02390">
    <property type="entry name" value="Methyltransf_4"/>
    <property type="match status" value="1"/>
</dbReference>
<dbReference type="SUPFAM" id="SSF53335">
    <property type="entry name" value="S-adenosyl-L-methionine-dependent methyltransferases"/>
    <property type="match status" value="1"/>
</dbReference>
<dbReference type="PROSITE" id="PS51625">
    <property type="entry name" value="SAM_MT_TRMB"/>
    <property type="match status" value="1"/>
</dbReference>
<reference key="1">
    <citation type="submission" date="2006-03" db="EMBL/GenBank/DDBJ databases">
        <title>Complete sequence of Methylobacillus flagellatus KT.</title>
        <authorList>
            <consortium name="US DOE Joint Genome Institute"/>
            <person name="Copeland A."/>
            <person name="Lucas S."/>
            <person name="Lapidus A."/>
            <person name="Barry K."/>
            <person name="Detter J.C."/>
            <person name="Glavina del Rio T."/>
            <person name="Hammon N."/>
            <person name="Israni S."/>
            <person name="Dalin E."/>
            <person name="Tice H."/>
            <person name="Pitluck S."/>
            <person name="Brettin T."/>
            <person name="Bruce D."/>
            <person name="Han C."/>
            <person name="Tapia R."/>
            <person name="Saunders E."/>
            <person name="Gilna P."/>
            <person name="Schmutz J."/>
            <person name="Larimer F."/>
            <person name="Land M."/>
            <person name="Kyrpides N."/>
            <person name="Anderson I."/>
            <person name="Richardson P."/>
        </authorList>
    </citation>
    <scope>NUCLEOTIDE SEQUENCE [LARGE SCALE GENOMIC DNA]</scope>
    <source>
        <strain>ATCC 51484 / DSM 6875 / VKM B-1610 / KT</strain>
    </source>
</reference>
<organism>
    <name type="scientific">Methylobacillus flagellatus (strain ATCC 51484 / DSM 6875 / VKM B-1610 / KT)</name>
    <dbReference type="NCBI Taxonomy" id="265072"/>
    <lineage>
        <taxon>Bacteria</taxon>
        <taxon>Pseudomonadati</taxon>
        <taxon>Pseudomonadota</taxon>
        <taxon>Betaproteobacteria</taxon>
        <taxon>Nitrosomonadales</taxon>
        <taxon>Methylophilaceae</taxon>
        <taxon>Methylobacillus</taxon>
    </lineage>
</organism>
<feature type="chain" id="PRO_0000288179" description="tRNA (guanine-N(7)-)-methyltransferase">
    <location>
        <begin position="1"/>
        <end position="238"/>
    </location>
</feature>
<feature type="active site" evidence="1">
    <location>
        <position position="146"/>
    </location>
</feature>
<feature type="binding site" evidence="2">
    <location>
        <position position="71"/>
    </location>
    <ligand>
        <name>S-adenosyl-L-methionine</name>
        <dbReference type="ChEBI" id="CHEBI:59789"/>
    </ligand>
</feature>
<feature type="binding site" evidence="2">
    <location>
        <position position="96"/>
    </location>
    <ligand>
        <name>S-adenosyl-L-methionine</name>
        <dbReference type="ChEBI" id="CHEBI:59789"/>
    </ligand>
</feature>
<feature type="binding site" evidence="2">
    <location>
        <position position="123"/>
    </location>
    <ligand>
        <name>S-adenosyl-L-methionine</name>
        <dbReference type="ChEBI" id="CHEBI:59789"/>
    </ligand>
</feature>
<feature type="binding site" evidence="2">
    <location>
        <position position="146"/>
    </location>
    <ligand>
        <name>S-adenosyl-L-methionine</name>
        <dbReference type="ChEBI" id="CHEBI:59789"/>
    </ligand>
</feature>
<feature type="binding site" evidence="2">
    <location>
        <position position="150"/>
    </location>
    <ligand>
        <name>substrate</name>
    </ligand>
</feature>
<feature type="binding site" evidence="2">
    <location>
        <position position="182"/>
    </location>
    <ligand>
        <name>substrate</name>
    </ligand>
</feature>
<feature type="binding site" evidence="2">
    <location>
        <begin position="217"/>
        <end position="220"/>
    </location>
    <ligand>
        <name>substrate</name>
    </ligand>
</feature>
<proteinExistence type="inferred from homology"/>
<gene>
    <name evidence="2" type="primary">trmB</name>
    <name type="ordered locus">Mfla_0231</name>
</gene>
<keyword id="KW-0489">Methyltransferase</keyword>
<keyword id="KW-1185">Reference proteome</keyword>
<keyword id="KW-0949">S-adenosyl-L-methionine</keyword>
<keyword id="KW-0808">Transferase</keyword>
<keyword id="KW-0819">tRNA processing</keyword>
<comment type="function">
    <text evidence="2">Catalyzes the formation of N(7)-methylguanine at position 46 (m7G46) in tRNA.</text>
</comment>
<comment type="catalytic activity">
    <reaction evidence="2">
        <text>guanosine(46) in tRNA + S-adenosyl-L-methionine = N(7)-methylguanosine(46) in tRNA + S-adenosyl-L-homocysteine</text>
        <dbReference type="Rhea" id="RHEA:42708"/>
        <dbReference type="Rhea" id="RHEA-COMP:10188"/>
        <dbReference type="Rhea" id="RHEA-COMP:10189"/>
        <dbReference type="ChEBI" id="CHEBI:57856"/>
        <dbReference type="ChEBI" id="CHEBI:59789"/>
        <dbReference type="ChEBI" id="CHEBI:74269"/>
        <dbReference type="ChEBI" id="CHEBI:74480"/>
        <dbReference type="EC" id="2.1.1.33"/>
    </reaction>
</comment>
<comment type="pathway">
    <text evidence="2">tRNA modification; N(7)-methylguanine-tRNA biosynthesis.</text>
</comment>
<comment type="similarity">
    <text evidence="2">Belongs to the class I-like SAM-binding methyltransferase superfamily. TrmB family.</text>
</comment>
<name>TRMB_METFK</name>
<sequence length="238" mass="27021">MAQEMTGNENIGKEELARRPIRSFVLRQGRLTHAQQRALDELMPVFGVPYAPVILDLDSLFGREGSPKVLEIGFGMGDSTAKIAQSQPECDFIGVEVHTPGVGSLLKQIGELQLNNLRIIQHDAVEVLQHMIADASLDGVHIFFPDPWHKKRHHKRRLIQAAFVKLLCSKMKAGAYLHVATDWQEYAEWVLDILQQEPLLENTAQSYAPKPDYRPLTKFENRGIKLGHGVWDIIFRRK</sequence>
<accession>Q1H4T5</accession>